<keyword id="KW-0325">Glycoprotein</keyword>
<keyword id="KW-0378">Hydrolase</keyword>
<keyword id="KW-0645">Protease</keyword>
<keyword id="KW-1185">Reference proteome</keyword>
<keyword id="KW-0964">Secreted</keyword>
<keyword id="KW-0720">Serine protease</keyword>
<keyword id="KW-0732">Signal</keyword>
<keyword id="KW-0843">Virulence</keyword>
<keyword id="KW-0865">Zymogen</keyword>
<dbReference type="EC" id="3.4.21.-"/>
<dbReference type="EMBL" id="DS995702">
    <property type="protein sequence ID" value="EEQ28657.1"/>
    <property type="molecule type" value="Genomic_DNA"/>
</dbReference>
<dbReference type="RefSeq" id="XP_002848542.1">
    <property type="nucleotide sequence ID" value="XM_002848496.1"/>
</dbReference>
<dbReference type="SMR" id="C5FH27"/>
<dbReference type="STRING" id="554155.C5FH27"/>
<dbReference type="MEROPS" id="S08.115"/>
<dbReference type="GlyCosmos" id="C5FH27">
    <property type="glycosylation" value="2 sites, No reported glycans"/>
</dbReference>
<dbReference type="GeneID" id="9230680"/>
<dbReference type="VEuPathDB" id="FungiDB:MCYG_01476"/>
<dbReference type="eggNOG" id="KOG1153">
    <property type="taxonomic scope" value="Eukaryota"/>
</dbReference>
<dbReference type="HOGENOM" id="CLU_011263_1_3_1"/>
<dbReference type="OMA" id="INAPDVW"/>
<dbReference type="OrthoDB" id="206201at2759"/>
<dbReference type="Proteomes" id="UP000002035">
    <property type="component" value="Unassembled WGS sequence"/>
</dbReference>
<dbReference type="GO" id="GO:0005576">
    <property type="term" value="C:extracellular region"/>
    <property type="evidence" value="ECO:0007669"/>
    <property type="project" value="UniProtKB-SubCell"/>
</dbReference>
<dbReference type="GO" id="GO:0004252">
    <property type="term" value="F:serine-type endopeptidase activity"/>
    <property type="evidence" value="ECO:0007669"/>
    <property type="project" value="InterPro"/>
</dbReference>
<dbReference type="GO" id="GO:0006508">
    <property type="term" value="P:proteolysis"/>
    <property type="evidence" value="ECO:0007669"/>
    <property type="project" value="UniProtKB-KW"/>
</dbReference>
<dbReference type="CDD" id="cd04077">
    <property type="entry name" value="Peptidases_S8_PCSK9_ProteinaseK_like"/>
    <property type="match status" value="1"/>
</dbReference>
<dbReference type="FunFam" id="3.40.50.200:FF:000014">
    <property type="entry name" value="Proteinase K"/>
    <property type="match status" value="1"/>
</dbReference>
<dbReference type="Gene3D" id="3.30.70.80">
    <property type="entry name" value="Peptidase S8 propeptide/proteinase inhibitor I9"/>
    <property type="match status" value="1"/>
</dbReference>
<dbReference type="Gene3D" id="3.40.50.200">
    <property type="entry name" value="Peptidase S8/S53 domain"/>
    <property type="match status" value="1"/>
</dbReference>
<dbReference type="InterPro" id="IPR034193">
    <property type="entry name" value="PCSK9_ProteinaseK-like"/>
</dbReference>
<dbReference type="InterPro" id="IPR000209">
    <property type="entry name" value="Peptidase_S8/S53_dom"/>
</dbReference>
<dbReference type="InterPro" id="IPR036852">
    <property type="entry name" value="Peptidase_S8/S53_dom_sf"/>
</dbReference>
<dbReference type="InterPro" id="IPR023828">
    <property type="entry name" value="Peptidase_S8_Ser-AS"/>
</dbReference>
<dbReference type="InterPro" id="IPR050131">
    <property type="entry name" value="Peptidase_S8_subtilisin-like"/>
</dbReference>
<dbReference type="InterPro" id="IPR015500">
    <property type="entry name" value="Peptidase_S8_subtilisin-rel"/>
</dbReference>
<dbReference type="InterPro" id="IPR010259">
    <property type="entry name" value="S8pro/Inhibitor_I9"/>
</dbReference>
<dbReference type="InterPro" id="IPR037045">
    <property type="entry name" value="S8pro/Inhibitor_I9_sf"/>
</dbReference>
<dbReference type="PANTHER" id="PTHR43806:SF11">
    <property type="entry name" value="CEREVISIN-RELATED"/>
    <property type="match status" value="1"/>
</dbReference>
<dbReference type="PANTHER" id="PTHR43806">
    <property type="entry name" value="PEPTIDASE S8"/>
    <property type="match status" value="1"/>
</dbReference>
<dbReference type="Pfam" id="PF05922">
    <property type="entry name" value="Inhibitor_I9"/>
    <property type="match status" value="1"/>
</dbReference>
<dbReference type="Pfam" id="PF00082">
    <property type="entry name" value="Peptidase_S8"/>
    <property type="match status" value="1"/>
</dbReference>
<dbReference type="PRINTS" id="PR00723">
    <property type="entry name" value="SUBTILISIN"/>
</dbReference>
<dbReference type="SUPFAM" id="SSF54897">
    <property type="entry name" value="Protease propeptides/inhibitors"/>
    <property type="match status" value="1"/>
</dbReference>
<dbReference type="SUPFAM" id="SSF52743">
    <property type="entry name" value="Subtilisin-like"/>
    <property type="match status" value="1"/>
</dbReference>
<dbReference type="PROSITE" id="PS51892">
    <property type="entry name" value="SUBTILASE"/>
    <property type="match status" value="1"/>
</dbReference>
<dbReference type="PROSITE" id="PS00138">
    <property type="entry name" value="SUBTILASE_SER"/>
    <property type="match status" value="1"/>
</dbReference>
<evidence type="ECO:0000250" key="1"/>
<evidence type="ECO:0000255" key="2"/>
<evidence type="ECO:0000255" key="3">
    <source>
        <dbReference type="PROSITE-ProRule" id="PRU01240"/>
    </source>
</evidence>
<evidence type="ECO:0000305" key="4"/>
<proteinExistence type="inferred from homology"/>
<gene>
    <name type="primary">SUB9</name>
    <name type="ORF">MCYG_01476</name>
</gene>
<feature type="signal peptide" evidence="2">
    <location>
        <begin position="1"/>
        <end position="20"/>
    </location>
</feature>
<feature type="propeptide" id="PRO_0000406388" evidence="1">
    <location>
        <begin position="21"/>
        <end position="120"/>
    </location>
</feature>
<feature type="chain" id="PRO_0000406389" description="Subtilisin-like protease 9">
    <location>
        <begin position="121"/>
        <end position="395"/>
    </location>
</feature>
<feature type="domain" description="Inhibitor I9" evidence="2">
    <location>
        <begin position="36"/>
        <end position="117"/>
    </location>
</feature>
<feature type="domain" description="Peptidase S8" evidence="3">
    <location>
        <begin position="128"/>
        <end position="395"/>
    </location>
</feature>
<feature type="active site" description="Charge relay system" evidence="3">
    <location>
        <position position="160"/>
    </location>
</feature>
<feature type="active site" description="Charge relay system" evidence="3">
    <location>
        <position position="191"/>
    </location>
</feature>
<feature type="active site" description="Charge relay system" evidence="3">
    <location>
        <position position="341"/>
    </location>
</feature>
<feature type="glycosylation site" description="N-linked (GlcNAc...) asparagine" evidence="2">
    <location>
        <position position="252"/>
    </location>
</feature>
<feature type="glycosylation site" description="N-linked (GlcNAc...) asparagine" evidence="2">
    <location>
        <position position="391"/>
    </location>
</feature>
<reference key="1">
    <citation type="journal article" date="2012" name="MBio">
        <title>Comparative genome analysis of Trichophyton rubrum and related dermatophytes reveals candidate genes involved in infection.</title>
        <authorList>
            <person name="Martinez D.A."/>
            <person name="Oliver B.G."/>
            <person name="Graeser Y."/>
            <person name="Goldberg J.M."/>
            <person name="Li W."/>
            <person name="Martinez-Rossi N.M."/>
            <person name="Monod M."/>
            <person name="Shelest E."/>
            <person name="Barton R.C."/>
            <person name="Birch E."/>
            <person name="Brakhage A.A."/>
            <person name="Chen Z."/>
            <person name="Gurr S.J."/>
            <person name="Heiman D."/>
            <person name="Heitman J."/>
            <person name="Kosti I."/>
            <person name="Rossi A."/>
            <person name="Saif S."/>
            <person name="Samalova M."/>
            <person name="Saunders C.W."/>
            <person name="Shea T."/>
            <person name="Summerbell R.C."/>
            <person name="Xu J."/>
            <person name="Young S."/>
            <person name="Zeng Q."/>
            <person name="Birren B.W."/>
            <person name="Cuomo C.A."/>
            <person name="White T.C."/>
        </authorList>
    </citation>
    <scope>NUCLEOTIDE SEQUENCE [LARGE SCALE GENOMIC DNA]</scope>
    <source>
        <strain>ATCC MYA-4605 / CBS 113480</strain>
    </source>
</reference>
<sequence length="395" mass="41502">MGFFRTLFSFSIFALSLADTSKFIGLDDVDNIIPNSYIVVMKGAVTEAEFKDHQVWASRIHRRSKRDGAADGLDGLKTTFDFQGFKAYCGTFDKESIERITRSSDVDYVEADRVVKMAALNTQRNAPSWGLGRISHKKAGSFDYVYDSDAGSGITIYGVDTGIDIHHPDFGGRATWGVNTVDSENSDQNGHGTHTAGTFAGATYGVAKKARIIAVKVLNAEGTGSTSGVIQGIEWSTNHASSNGLSGKAAMNLSLGVRSSSVFNSAAEAAQRSGIFLAVAAGNDGFSPASARGVCTVAATDAQDQATSWSNYGSTVALYAPGDKILSIYPNGGTATLSGTSMASPHVCGVGAYLMALEGIGPGRVCDRIKQLALESVKNPGPDTTRRLLYNGSGA</sequence>
<accession>C5FH27</accession>
<name>SUB9_ARTOC</name>
<comment type="function">
    <text evidence="1">Secreted subtilisin-like serine protease with keratinolytic activity that contributes to pathogenicity.</text>
</comment>
<comment type="subcellular location">
    <subcellularLocation>
        <location evidence="1">Secreted</location>
    </subcellularLocation>
</comment>
<comment type="similarity">
    <text evidence="4">Belongs to the peptidase S8 family.</text>
</comment>
<organism>
    <name type="scientific">Arthroderma otae (strain ATCC MYA-4605 / CBS 113480)</name>
    <name type="common">Microsporum canis</name>
    <dbReference type="NCBI Taxonomy" id="554155"/>
    <lineage>
        <taxon>Eukaryota</taxon>
        <taxon>Fungi</taxon>
        <taxon>Dikarya</taxon>
        <taxon>Ascomycota</taxon>
        <taxon>Pezizomycotina</taxon>
        <taxon>Eurotiomycetes</taxon>
        <taxon>Eurotiomycetidae</taxon>
        <taxon>Onygenales</taxon>
        <taxon>Arthrodermataceae</taxon>
        <taxon>Microsporum</taxon>
    </lineage>
</organism>
<protein>
    <recommendedName>
        <fullName>Subtilisin-like protease 9</fullName>
        <ecNumber>3.4.21.-</ecNumber>
    </recommendedName>
</protein>